<gene>
    <name evidence="1" type="primary">gatA</name>
</gene>
<protein>
    <recommendedName>
        <fullName evidence="1">Glutamyl-tRNA(Gln) amidotransferase subunit A</fullName>
        <shortName evidence="1">Glu-ADT subunit A</shortName>
        <ecNumber evidence="1">6.3.5.7</ecNumber>
    </recommendedName>
</protein>
<accession>Q93LE2</accession>
<comment type="function">
    <text evidence="1">Allows the formation of correctly charged Gln-tRNA(Gln) through the transamidation of misacylated Glu-tRNA(Gln) in organisms which lack glutaminyl-tRNA synthetase. The reaction takes place in the presence of glutamine and ATP through an activated gamma-phospho-Glu-tRNA(Gln).</text>
</comment>
<comment type="catalytic activity">
    <reaction evidence="1">
        <text>L-glutamyl-tRNA(Gln) + L-glutamine + ATP + H2O = L-glutaminyl-tRNA(Gln) + L-glutamate + ADP + phosphate + H(+)</text>
        <dbReference type="Rhea" id="RHEA:17521"/>
        <dbReference type="Rhea" id="RHEA-COMP:9681"/>
        <dbReference type="Rhea" id="RHEA-COMP:9684"/>
        <dbReference type="ChEBI" id="CHEBI:15377"/>
        <dbReference type="ChEBI" id="CHEBI:15378"/>
        <dbReference type="ChEBI" id="CHEBI:29985"/>
        <dbReference type="ChEBI" id="CHEBI:30616"/>
        <dbReference type="ChEBI" id="CHEBI:43474"/>
        <dbReference type="ChEBI" id="CHEBI:58359"/>
        <dbReference type="ChEBI" id="CHEBI:78520"/>
        <dbReference type="ChEBI" id="CHEBI:78521"/>
        <dbReference type="ChEBI" id="CHEBI:456216"/>
        <dbReference type="EC" id="6.3.5.7"/>
    </reaction>
</comment>
<comment type="subunit">
    <text evidence="1">Heterotrimer of A, B and C subunits.</text>
</comment>
<comment type="similarity">
    <text evidence="1">Belongs to the amidase family. GatA subfamily.</text>
</comment>
<reference key="1">
    <citation type="journal article" date="2002" name="Mol. Cells">
        <title>Expression, purification, and crystallization of glutamyl-tRNA(Gln) specific amidotransferase from Bacillus stearothermophilus.</title>
        <authorList>
            <person name="Kwak J.H."/>
            <person name="Shin K."/>
            <person name="Woo J.S."/>
            <person name="Kim M.K."/>
            <person name="Kim S.-I."/>
            <person name="Eom S.H."/>
            <person name="Hong K.W."/>
        </authorList>
    </citation>
    <scope>NUCLEOTIDE SEQUENCE [GENOMIC DNA]</scope>
</reference>
<keyword id="KW-0067">ATP-binding</keyword>
<keyword id="KW-0436">Ligase</keyword>
<keyword id="KW-0547">Nucleotide-binding</keyword>
<keyword id="KW-0648">Protein biosynthesis</keyword>
<name>GATA_GEOSE</name>
<proteinExistence type="inferred from homology"/>
<feature type="chain" id="PRO_0000105137" description="Glutamyl-tRNA(Gln) amidotransferase subunit A">
    <location>
        <begin position="1"/>
        <end position="485"/>
    </location>
</feature>
<feature type="active site" description="Charge relay system" evidence="1">
    <location>
        <position position="79"/>
    </location>
</feature>
<feature type="active site" description="Charge relay system" evidence="1">
    <location>
        <position position="154"/>
    </location>
</feature>
<feature type="active site" description="Acyl-ester intermediate" evidence="1">
    <location>
        <position position="178"/>
    </location>
</feature>
<evidence type="ECO:0000255" key="1">
    <source>
        <dbReference type="HAMAP-Rule" id="MF_00120"/>
    </source>
</evidence>
<organism>
    <name type="scientific">Geobacillus stearothermophilus</name>
    <name type="common">Bacillus stearothermophilus</name>
    <dbReference type="NCBI Taxonomy" id="1422"/>
    <lineage>
        <taxon>Bacteria</taxon>
        <taxon>Bacillati</taxon>
        <taxon>Bacillota</taxon>
        <taxon>Bacilli</taxon>
        <taxon>Bacillales</taxon>
        <taxon>Anoxybacillaceae</taxon>
        <taxon>Geobacillus</taxon>
    </lineage>
</organism>
<sequence length="485" mass="52638">MSLFDHSVSELHTLLQKKEVSISDLVDESYRRIGEVEEKVQAFLTLNEEQARAKAKELDDQLAKGEETNPLFGLPIGIKDNIVTKGLRTTCAIKILYNFDPIYDATVMERLNAAGAITIGKLNMDEFAMGSSTENSGFQLTRNPWDLKRVPGGSSGGSAAAVAAGEVPFALGSDTGGSIRQPAAFCGVVGLKPTYGRVSRFGLVAFASSLDQIGPITRTVEDNAYLLQAIAGVDPMDSTSANVPVPNYVEALTGDIKGLKIAVPNEYLGEGVDEGVRQSVLAALAVLEKLGATWEEVSLPHSKYALATYYLLASSEASANLARFDGVRYGYRTDNAKNLIDMYKLTRSEGFGAEVKRRIMLGTFALSSGYYDAYYKKAQKVRTLIKRDFENVFERYDVIIGPTTPTPAFKIGEKTSDPLTMYANDILTIPVNLAGVPAISVPCGFVDGLPVGLQIIGKHFDESTVYRVAHAFEQATDYHKQKPVL</sequence>
<dbReference type="EC" id="6.3.5.7" evidence="1"/>
<dbReference type="EMBL" id="AY040860">
    <property type="protein sequence ID" value="AAK72612.1"/>
    <property type="molecule type" value="Genomic_DNA"/>
</dbReference>
<dbReference type="SMR" id="Q93LE2"/>
<dbReference type="GO" id="GO:0030956">
    <property type="term" value="C:glutamyl-tRNA(Gln) amidotransferase complex"/>
    <property type="evidence" value="ECO:0007669"/>
    <property type="project" value="InterPro"/>
</dbReference>
<dbReference type="GO" id="GO:0005524">
    <property type="term" value="F:ATP binding"/>
    <property type="evidence" value="ECO:0007669"/>
    <property type="project" value="UniProtKB-KW"/>
</dbReference>
<dbReference type="GO" id="GO:0050567">
    <property type="term" value="F:glutaminyl-tRNA synthase (glutamine-hydrolyzing) activity"/>
    <property type="evidence" value="ECO:0007669"/>
    <property type="project" value="UniProtKB-UniRule"/>
</dbReference>
<dbReference type="GO" id="GO:0006412">
    <property type="term" value="P:translation"/>
    <property type="evidence" value="ECO:0007669"/>
    <property type="project" value="UniProtKB-UniRule"/>
</dbReference>
<dbReference type="Gene3D" id="3.90.1300.10">
    <property type="entry name" value="Amidase signature (AS) domain"/>
    <property type="match status" value="1"/>
</dbReference>
<dbReference type="HAMAP" id="MF_00120">
    <property type="entry name" value="GatA"/>
    <property type="match status" value="1"/>
</dbReference>
<dbReference type="InterPro" id="IPR000120">
    <property type="entry name" value="Amidase"/>
</dbReference>
<dbReference type="InterPro" id="IPR020556">
    <property type="entry name" value="Amidase_CS"/>
</dbReference>
<dbReference type="InterPro" id="IPR023631">
    <property type="entry name" value="Amidase_dom"/>
</dbReference>
<dbReference type="InterPro" id="IPR036928">
    <property type="entry name" value="AS_sf"/>
</dbReference>
<dbReference type="InterPro" id="IPR004412">
    <property type="entry name" value="GatA"/>
</dbReference>
<dbReference type="NCBIfam" id="TIGR00132">
    <property type="entry name" value="gatA"/>
    <property type="match status" value="1"/>
</dbReference>
<dbReference type="PANTHER" id="PTHR11895:SF151">
    <property type="entry name" value="GLUTAMYL-TRNA(GLN) AMIDOTRANSFERASE SUBUNIT A"/>
    <property type="match status" value="1"/>
</dbReference>
<dbReference type="PANTHER" id="PTHR11895">
    <property type="entry name" value="TRANSAMIDASE"/>
    <property type="match status" value="1"/>
</dbReference>
<dbReference type="Pfam" id="PF01425">
    <property type="entry name" value="Amidase"/>
    <property type="match status" value="1"/>
</dbReference>
<dbReference type="SUPFAM" id="SSF75304">
    <property type="entry name" value="Amidase signature (AS) enzymes"/>
    <property type="match status" value="1"/>
</dbReference>
<dbReference type="PROSITE" id="PS00571">
    <property type="entry name" value="AMIDASES"/>
    <property type="match status" value="1"/>
</dbReference>